<dbReference type="EC" id="2.7.7.18" evidence="1"/>
<dbReference type="EMBL" id="CP001175">
    <property type="protein sequence ID" value="ACK39430.1"/>
    <property type="molecule type" value="Genomic_DNA"/>
</dbReference>
<dbReference type="RefSeq" id="WP_003730138.1">
    <property type="nucleotide sequence ID" value="NC_011660.1"/>
</dbReference>
<dbReference type="SMR" id="B8DE23"/>
<dbReference type="KEGG" id="lmh:LMHCC_1082"/>
<dbReference type="HOGENOM" id="CLU_069765_3_1_9"/>
<dbReference type="UniPathway" id="UPA00253">
    <property type="reaction ID" value="UER00332"/>
</dbReference>
<dbReference type="GO" id="GO:0005524">
    <property type="term" value="F:ATP binding"/>
    <property type="evidence" value="ECO:0007669"/>
    <property type="project" value="UniProtKB-KW"/>
</dbReference>
<dbReference type="GO" id="GO:0004515">
    <property type="term" value="F:nicotinate-nucleotide adenylyltransferase activity"/>
    <property type="evidence" value="ECO:0007669"/>
    <property type="project" value="UniProtKB-UniRule"/>
</dbReference>
<dbReference type="GO" id="GO:0009435">
    <property type="term" value="P:NAD biosynthetic process"/>
    <property type="evidence" value="ECO:0007669"/>
    <property type="project" value="UniProtKB-UniRule"/>
</dbReference>
<dbReference type="CDD" id="cd02165">
    <property type="entry name" value="NMNAT"/>
    <property type="match status" value="1"/>
</dbReference>
<dbReference type="FunFam" id="3.40.50.620:FF:000079">
    <property type="entry name" value="Probable nicotinate-nucleotide adenylyltransferase"/>
    <property type="match status" value="1"/>
</dbReference>
<dbReference type="Gene3D" id="3.40.50.620">
    <property type="entry name" value="HUPs"/>
    <property type="match status" value="1"/>
</dbReference>
<dbReference type="HAMAP" id="MF_00244">
    <property type="entry name" value="NaMN_adenylyltr"/>
    <property type="match status" value="1"/>
</dbReference>
<dbReference type="InterPro" id="IPR004821">
    <property type="entry name" value="Cyt_trans-like"/>
</dbReference>
<dbReference type="InterPro" id="IPR005248">
    <property type="entry name" value="NadD/NMNAT"/>
</dbReference>
<dbReference type="InterPro" id="IPR014729">
    <property type="entry name" value="Rossmann-like_a/b/a_fold"/>
</dbReference>
<dbReference type="NCBIfam" id="TIGR00125">
    <property type="entry name" value="cyt_tran_rel"/>
    <property type="match status" value="1"/>
</dbReference>
<dbReference type="NCBIfam" id="TIGR00482">
    <property type="entry name" value="nicotinate (nicotinamide) nucleotide adenylyltransferase"/>
    <property type="match status" value="1"/>
</dbReference>
<dbReference type="NCBIfam" id="NF000840">
    <property type="entry name" value="PRK00071.1-3"/>
    <property type="match status" value="1"/>
</dbReference>
<dbReference type="NCBIfam" id="NF000841">
    <property type="entry name" value="PRK00071.1-4"/>
    <property type="match status" value="1"/>
</dbReference>
<dbReference type="PANTHER" id="PTHR39321">
    <property type="entry name" value="NICOTINATE-NUCLEOTIDE ADENYLYLTRANSFERASE-RELATED"/>
    <property type="match status" value="1"/>
</dbReference>
<dbReference type="PANTHER" id="PTHR39321:SF3">
    <property type="entry name" value="PHOSPHOPANTETHEINE ADENYLYLTRANSFERASE"/>
    <property type="match status" value="1"/>
</dbReference>
<dbReference type="Pfam" id="PF01467">
    <property type="entry name" value="CTP_transf_like"/>
    <property type="match status" value="1"/>
</dbReference>
<dbReference type="SUPFAM" id="SSF52374">
    <property type="entry name" value="Nucleotidylyl transferase"/>
    <property type="match status" value="1"/>
</dbReference>
<proteinExistence type="inferred from homology"/>
<reference key="1">
    <citation type="journal article" date="2011" name="J. Bacteriol.">
        <title>Genome sequence of lineage III Listeria monocytogenes strain HCC23.</title>
        <authorList>
            <person name="Steele C.L."/>
            <person name="Donaldson J.R."/>
            <person name="Paul D."/>
            <person name="Banes M.M."/>
            <person name="Arick T."/>
            <person name="Bridges S.M."/>
            <person name="Lawrence M.L."/>
        </authorList>
    </citation>
    <scope>NUCLEOTIDE SEQUENCE [LARGE SCALE GENOMIC DNA]</scope>
    <source>
        <strain>HCC23</strain>
    </source>
</reference>
<keyword id="KW-0067">ATP-binding</keyword>
<keyword id="KW-0520">NAD</keyword>
<keyword id="KW-0547">Nucleotide-binding</keyword>
<keyword id="KW-0548">Nucleotidyltransferase</keyword>
<keyword id="KW-0662">Pyridine nucleotide biosynthesis</keyword>
<keyword id="KW-0808">Transferase</keyword>
<feature type="chain" id="PRO_1000125353" description="Probable nicotinate-nucleotide adenylyltransferase">
    <location>
        <begin position="1"/>
        <end position="188"/>
    </location>
</feature>
<accession>B8DE23</accession>
<name>NADD_LISMH</name>
<gene>
    <name evidence="1" type="primary">nadD</name>
    <name type="ordered locus">LMHCC_1082</name>
</gene>
<sequence length="188" mass="21802">MKHKVGILGGTFDPPHLAHLRMAEEAKKQLGLEKILFLPNKIPPHKHISGMASSDERVEMLQLMIEGIDSFEIDTRELMRTGKSYTYDTMRDMISEQPDTDFYFIIGGDMVEYLPKWYHIDDLVKMVTFVGVNRPSYQTEVPYDIVKINMPETTISSTEIRNNIENASTFLPEKVWSYIKEHQLYGKK</sequence>
<comment type="function">
    <text evidence="1">Catalyzes the reversible adenylation of nicotinate mononucleotide (NaMN) to nicotinic acid adenine dinucleotide (NaAD).</text>
</comment>
<comment type="catalytic activity">
    <reaction evidence="1">
        <text>nicotinate beta-D-ribonucleotide + ATP + H(+) = deamido-NAD(+) + diphosphate</text>
        <dbReference type="Rhea" id="RHEA:22860"/>
        <dbReference type="ChEBI" id="CHEBI:15378"/>
        <dbReference type="ChEBI" id="CHEBI:30616"/>
        <dbReference type="ChEBI" id="CHEBI:33019"/>
        <dbReference type="ChEBI" id="CHEBI:57502"/>
        <dbReference type="ChEBI" id="CHEBI:58437"/>
        <dbReference type="EC" id="2.7.7.18"/>
    </reaction>
</comment>
<comment type="pathway">
    <text evidence="1">Cofactor biosynthesis; NAD(+) biosynthesis; deamido-NAD(+) from nicotinate D-ribonucleotide: step 1/1.</text>
</comment>
<comment type="similarity">
    <text evidence="1">Belongs to the NadD family.</text>
</comment>
<organism>
    <name type="scientific">Listeria monocytogenes serotype 4a (strain HCC23)</name>
    <dbReference type="NCBI Taxonomy" id="552536"/>
    <lineage>
        <taxon>Bacteria</taxon>
        <taxon>Bacillati</taxon>
        <taxon>Bacillota</taxon>
        <taxon>Bacilli</taxon>
        <taxon>Bacillales</taxon>
        <taxon>Listeriaceae</taxon>
        <taxon>Listeria</taxon>
    </lineage>
</organism>
<evidence type="ECO:0000255" key="1">
    <source>
        <dbReference type="HAMAP-Rule" id="MF_00244"/>
    </source>
</evidence>
<protein>
    <recommendedName>
        <fullName evidence="1">Probable nicotinate-nucleotide adenylyltransferase</fullName>
        <ecNumber evidence="1">2.7.7.18</ecNumber>
    </recommendedName>
    <alternativeName>
        <fullName evidence="1">Deamido-NAD(+) diphosphorylase</fullName>
    </alternativeName>
    <alternativeName>
        <fullName evidence="1">Deamido-NAD(+) pyrophosphorylase</fullName>
    </alternativeName>
    <alternativeName>
        <fullName evidence="1">Nicotinate mononucleotide adenylyltransferase</fullName>
        <shortName evidence="1">NaMN adenylyltransferase</shortName>
    </alternativeName>
</protein>